<gene>
    <name evidence="1" type="primary">ureA</name>
    <name type="ordered locus">BPP3858</name>
</gene>
<proteinExistence type="inferred from homology"/>
<feature type="chain" id="PRO_0000097995" description="Urease subunit gamma">
    <location>
        <begin position="1"/>
        <end position="100"/>
    </location>
</feature>
<keyword id="KW-0963">Cytoplasm</keyword>
<keyword id="KW-0378">Hydrolase</keyword>
<sequence length="100" mass="11048">MELTPREKDKLLIFTAALLAERRRARGLKLNYPETVALITAALMEGARDGKTVAELMSEGTRILGRDEVMEGVPEMISNIQVEVTFPDGTKLITVHNPVV</sequence>
<name>URE3_BORPA</name>
<reference key="1">
    <citation type="journal article" date="2003" name="Nat. Genet.">
        <title>Comparative analysis of the genome sequences of Bordetella pertussis, Bordetella parapertussis and Bordetella bronchiseptica.</title>
        <authorList>
            <person name="Parkhill J."/>
            <person name="Sebaihia M."/>
            <person name="Preston A."/>
            <person name="Murphy L.D."/>
            <person name="Thomson N.R."/>
            <person name="Harris D.E."/>
            <person name="Holden M.T.G."/>
            <person name="Churcher C.M."/>
            <person name="Bentley S.D."/>
            <person name="Mungall K.L."/>
            <person name="Cerdeno-Tarraga A.-M."/>
            <person name="Temple L."/>
            <person name="James K.D."/>
            <person name="Harris B."/>
            <person name="Quail M.A."/>
            <person name="Achtman M."/>
            <person name="Atkin R."/>
            <person name="Baker S."/>
            <person name="Basham D."/>
            <person name="Bason N."/>
            <person name="Cherevach I."/>
            <person name="Chillingworth T."/>
            <person name="Collins M."/>
            <person name="Cronin A."/>
            <person name="Davis P."/>
            <person name="Doggett J."/>
            <person name="Feltwell T."/>
            <person name="Goble A."/>
            <person name="Hamlin N."/>
            <person name="Hauser H."/>
            <person name="Holroyd S."/>
            <person name="Jagels K."/>
            <person name="Leather S."/>
            <person name="Moule S."/>
            <person name="Norberczak H."/>
            <person name="O'Neil S."/>
            <person name="Ormond D."/>
            <person name="Price C."/>
            <person name="Rabbinowitsch E."/>
            <person name="Rutter S."/>
            <person name="Sanders M."/>
            <person name="Saunders D."/>
            <person name="Seeger K."/>
            <person name="Sharp S."/>
            <person name="Simmonds M."/>
            <person name="Skelton J."/>
            <person name="Squares R."/>
            <person name="Squares S."/>
            <person name="Stevens K."/>
            <person name="Unwin L."/>
            <person name="Whitehead S."/>
            <person name="Barrell B.G."/>
            <person name="Maskell D.J."/>
        </authorList>
    </citation>
    <scope>NUCLEOTIDE SEQUENCE [LARGE SCALE GENOMIC DNA]</scope>
    <source>
        <strain>12822 / ATCC BAA-587 / NCTC 13253</strain>
    </source>
</reference>
<protein>
    <recommendedName>
        <fullName evidence="1">Urease subunit gamma</fullName>
        <ecNumber evidence="1">3.5.1.5</ecNumber>
    </recommendedName>
    <alternativeName>
        <fullName evidence="1">Urea amidohydrolase subunit gamma</fullName>
    </alternativeName>
</protein>
<accession>P0A4U1</accession>
<accession>O06705</accession>
<dbReference type="EC" id="3.5.1.5" evidence="1"/>
<dbReference type="EMBL" id="BX640435">
    <property type="protein sequence ID" value="CAE39141.1"/>
    <property type="molecule type" value="Genomic_DNA"/>
</dbReference>
<dbReference type="RefSeq" id="WP_003814830.1">
    <property type="nucleotide sequence ID" value="NC_002928.3"/>
</dbReference>
<dbReference type="SMR" id="P0A4U1"/>
<dbReference type="KEGG" id="bpa:BPP3858"/>
<dbReference type="HOGENOM" id="CLU_145825_1_0_4"/>
<dbReference type="UniPathway" id="UPA00258">
    <property type="reaction ID" value="UER00370"/>
</dbReference>
<dbReference type="Proteomes" id="UP000001421">
    <property type="component" value="Chromosome"/>
</dbReference>
<dbReference type="GO" id="GO:0005737">
    <property type="term" value="C:cytoplasm"/>
    <property type="evidence" value="ECO:0007669"/>
    <property type="project" value="UniProtKB-SubCell"/>
</dbReference>
<dbReference type="GO" id="GO:0016151">
    <property type="term" value="F:nickel cation binding"/>
    <property type="evidence" value="ECO:0007669"/>
    <property type="project" value="InterPro"/>
</dbReference>
<dbReference type="GO" id="GO:0009039">
    <property type="term" value="F:urease activity"/>
    <property type="evidence" value="ECO:0007669"/>
    <property type="project" value="UniProtKB-UniRule"/>
</dbReference>
<dbReference type="GO" id="GO:0043419">
    <property type="term" value="P:urea catabolic process"/>
    <property type="evidence" value="ECO:0007669"/>
    <property type="project" value="UniProtKB-UniRule"/>
</dbReference>
<dbReference type="CDD" id="cd00390">
    <property type="entry name" value="Urease_gamma"/>
    <property type="match status" value="1"/>
</dbReference>
<dbReference type="Gene3D" id="3.30.280.10">
    <property type="entry name" value="Urease, gamma-like subunit"/>
    <property type="match status" value="1"/>
</dbReference>
<dbReference type="HAMAP" id="MF_00739">
    <property type="entry name" value="Urease_gamma"/>
    <property type="match status" value="1"/>
</dbReference>
<dbReference type="InterPro" id="IPR012010">
    <property type="entry name" value="Urease_gamma"/>
</dbReference>
<dbReference type="InterPro" id="IPR002026">
    <property type="entry name" value="Urease_gamma/gamma-beta_su"/>
</dbReference>
<dbReference type="InterPro" id="IPR036463">
    <property type="entry name" value="Urease_gamma_sf"/>
</dbReference>
<dbReference type="InterPro" id="IPR050069">
    <property type="entry name" value="Urease_subunit"/>
</dbReference>
<dbReference type="NCBIfam" id="NF009712">
    <property type="entry name" value="PRK13241.1"/>
    <property type="match status" value="1"/>
</dbReference>
<dbReference type="NCBIfam" id="TIGR00193">
    <property type="entry name" value="urease_gam"/>
    <property type="match status" value="1"/>
</dbReference>
<dbReference type="PANTHER" id="PTHR33569">
    <property type="entry name" value="UREASE"/>
    <property type="match status" value="1"/>
</dbReference>
<dbReference type="PANTHER" id="PTHR33569:SF1">
    <property type="entry name" value="UREASE"/>
    <property type="match status" value="1"/>
</dbReference>
<dbReference type="Pfam" id="PF00547">
    <property type="entry name" value="Urease_gamma"/>
    <property type="match status" value="1"/>
</dbReference>
<dbReference type="PIRSF" id="PIRSF001223">
    <property type="entry name" value="Urease_gamma"/>
    <property type="match status" value="1"/>
</dbReference>
<dbReference type="SUPFAM" id="SSF54111">
    <property type="entry name" value="Urease, gamma-subunit"/>
    <property type="match status" value="1"/>
</dbReference>
<organism>
    <name type="scientific">Bordetella parapertussis (strain 12822 / ATCC BAA-587 / NCTC 13253)</name>
    <dbReference type="NCBI Taxonomy" id="257311"/>
    <lineage>
        <taxon>Bacteria</taxon>
        <taxon>Pseudomonadati</taxon>
        <taxon>Pseudomonadota</taxon>
        <taxon>Betaproteobacteria</taxon>
        <taxon>Burkholderiales</taxon>
        <taxon>Alcaligenaceae</taxon>
        <taxon>Bordetella</taxon>
    </lineage>
</organism>
<comment type="catalytic activity">
    <reaction evidence="1">
        <text>urea + 2 H2O + H(+) = hydrogencarbonate + 2 NH4(+)</text>
        <dbReference type="Rhea" id="RHEA:20557"/>
        <dbReference type="ChEBI" id="CHEBI:15377"/>
        <dbReference type="ChEBI" id="CHEBI:15378"/>
        <dbReference type="ChEBI" id="CHEBI:16199"/>
        <dbReference type="ChEBI" id="CHEBI:17544"/>
        <dbReference type="ChEBI" id="CHEBI:28938"/>
        <dbReference type="EC" id="3.5.1.5"/>
    </reaction>
</comment>
<comment type="pathway">
    <text evidence="1">Nitrogen metabolism; urea degradation; CO(2) and NH(3) from urea (urease route): step 1/1.</text>
</comment>
<comment type="subunit">
    <text evidence="1">Heterotrimer of UreA (gamma), UreB (beta) and UreC (alpha) subunits. Three heterotrimers associate to form the active enzyme.</text>
</comment>
<comment type="subcellular location">
    <subcellularLocation>
        <location evidence="1">Cytoplasm</location>
    </subcellularLocation>
</comment>
<comment type="similarity">
    <text evidence="1">Belongs to the urease gamma subunit family.</text>
</comment>
<evidence type="ECO:0000255" key="1">
    <source>
        <dbReference type="HAMAP-Rule" id="MF_00739"/>
    </source>
</evidence>